<dbReference type="EMBL" id="AY745241">
    <property type="protein sequence ID" value="AAU43788.1"/>
    <property type="molecule type" value="mRNA"/>
</dbReference>
<dbReference type="RefSeq" id="NP_001005760.1">
    <property type="nucleotide sequence ID" value="NM_001005760.1"/>
</dbReference>
<dbReference type="SMR" id="Q5XNR9"/>
<dbReference type="FunCoup" id="Q5XNR9">
    <property type="interactions" value="51"/>
</dbReference>
<dbReference type="STRING" id="9615.ENSCAFP00000047973"/>
<dbReference type="GlyCosmos" id="Q5XNR9">
    <property type="glycosylation" value="20 sites, No reported glycans"/>
</dbReference>
<dbReference type="PaxDb" id="9612-ENSCAFP00000027533"/>
<dbReference type="Ensembl" id="ENSCAFT00000029624.5">
    <property type="protein sequence ID" value="ENSCAFP00000027533.5"/>
    <property type="gene ID" value="ENSCAFG00000018661.5"/>
</dbReference>
<dbReference type="GeneID" id="449478"/>
<dbReference type="KEGG" id="cfa:449478"/>
<dbReference type="CTD" id="3977"/>
<dbReference type="VGNC" id="VGNC:42672">
    <property type="gene designation" value="LIFR"/>
</dbReference>
<dbReference type="eggNOG" id="ENOG502QQF6">
    <property type="taxonomic scope" value="Eukaryota"/>
</dbReference>
<dbReference type="HOGENOM" id="CLU_283805_0_0_1"/>
<dbReference type="InParanoid" id="Q5XNR9"/>
<dbReference type="OMA" id="FFLYGCK"/>
<dbReference type="OrthoDB" id="6382334at2759"/>
<dbReference type="TreeFam" id="TF338122"/>
<dbReference type="Reactome" id="R-CFA-6788467">
    <property type="pathway name" value="IL-6-type cytokine receptor ligand interactions"/>
</dbReference>
<dbReference type="Proteomes" id="UP000002254">
    <property type="component" value="Chromosome 4"/>
</dbReference>
<dbReference type="Proteomes" id="UP000694429">
    <property type="component" value="Unplaced"/>
</dbReference>
<dbReference type="Proteomes" id="UP000694542">
    <property type="component" value="Unplaced"/>
</dbReference>
<dbReference type="Proteomes" id="UP000805418">
    <property type="component" value="Unplaced"/>
</dbReference>
<dbReference type="GO" id="GO:0005886">
    <property type="term" value="C:plasma membrane"/>
    <property type="evidence" value="ECO:0007669"/>
    <property type="project" value="UniProtKB-SubCell"/>
</dbReference>
<dbReference type="GO" id="GO:0004896">
    <property type="term" value="F:cytokine receptor activity"/>
    <property type="evidence" value="ECO:0007669"/>
    <property type="project" value="InterPro"/>
</dbReference>
<dbReference type="CDD" id="cd00063">
    <property type="entry name" value="FN3"/>
    <property type="match status" value="3"/>
</dbReference>
<dbReference type="FunFam" id="2.60.40.10:FF:000578">
    <property type="entry name" value="Leukemia inhibitory factor receptor"/>
    <property type="match status" value="1"/>
</dbReference>
<dbReference type="FunFam" id="2.60.40.10:FF:000607">
    <property type="entry name" value="Leukemia inhibitory factor receptor"/>
    <property type="match status" value="1"/>
</dbReference>
<dbReference type="FunFam" id="2.60.40.10:FF:000657">
    <property type="entry name" value="Leukemia inhibitory factor receptor"/>
    <property type="match status" value="1"/>
</dbReference>
<dbReference type="FunFam" id="2.60.40.10:FF:000738">
    <property type="entry name" value="Leukemia inhibitory factor receptor"/>
    <property type="match status" value="1"/>
</dbReference>
<dbReference type="FunFam" id="2.60.40.10:FF:000808">
    <property type="entry name" value="Leukemia inhibitory factor receptor"/>
    <property type="match status" value="1"/>
</dbReference>
<dbReference type="FunFam" id="2.60.40.10:FF:001265">
    <property type="entry name" value="Leukemia inhibitory factor receptor"/>
    <property type="match status" value="1"/>
</dbReference>
<dbReference type="FunFam" id="2.60.40.10:FF:001011">
    <property type="entry name" value="leukemia inhibitory factor receptor"/>
    <property type="match status" value="1"/>
</dbReference>
<dbReference type="FunFam" id="2.60.40.10:FF:001124">
    <property type="entry name" value="leukemia inhibitory factor receptor"/>
    <property type="match status" value="1"/>
</dbReference>
<dbReference type="Gene3D" id="2.60.40.10">
    <property type="entry name" value="Immunoglobulins"/>
    <property type="match status" value="8"/>
</dbReference>
<dbReference type="InterPro" id="IPR003961">
    <property type="entry name" value="FN3_dom"/>
</dbReference>
<dbReference type="InterPro" id="IPR036116">
    <property type="entry name" value="FN3_sf"/>
</dbReference>
<dbReference type="InterPro" id="IPR003529">
    <property type="entry name" value="Hematopoietin_rcpt_Gp130_CS"/>
</dbReference>
<dbReference type="InterPro" id="IPR013783">
    <property type="entry name" value="Ig-like_fold"/>
</dbReference>
<dbReference type="InterPro" id="IPR048497">
    <property type="entry name" value="LIF-R-like_Ig-like"/>
</dbReference>
<dbReference type="InterPro" id="IPR040817">
    <property type="entry name" value="LIFR_D2"/>
</dbReference>
<dbReference type="InterPro" id="IPR040901">
    <property type="entry name" value="LIFR_N"/>
</dbReference>
<dbReference type="InterPro" id="IPR050379">
    <property type="entry name" value="Type-I_Cytokine_Rcpt"/>
</dbReference>
<dbReference type="PANTHER" id="PTHR23036">
    <property type="entry name" value="CYTOKINE RECEPTOR"/>
    <property type="match status" value="1"/>
</dbReference>
<dbReference type="PANTHER" id="PTHR23036:SF105">
    <property type="entry name" value="LEUKEMIA INHIBITORY FACTOR RECEPTOR"/>
    <property type="match status" value="1"/>
</dbReference>
<dbReference type="Pfam" id="PF00041">
    <property type="entry name" value="fn3"/>
    <property type="match status" value="1"/>
</dbReference>
<dbReference type="Pfam" id="PF21177">
    <property type="entry name" value="LIF-R_Ig-like"/>
    <property type="match status" value="1"/>
</dbReference>
<dbReference type="Pfam" id="PF17971">
    <property type="entry name" value="LIFR_D2"/>
    <property type="match status" value="1"/>
</dbReference>
<dbReference type="Pfam" id="PF18207">
    <property type="entry name" value="LIFR_N"/>
    <property type="match status" value="1"/>
</dbReference>
<dbReference type="SMART" id="SM00060">
    <property type="entry name" value="FN3"/>
    <property type="match status" value="5"/>
</dbReference>
<dbReference type="SUPFAM" id="SSF49265">
    <property type="entry name" value="Fibronectin type III"/>
    <property type="match status" value="4"/>
</dbReference>
<dbReference type="PROSITE" id="PS50853">
    <property type="entry name" value="FN3"/>
    <property type="match status" value="4"/>
</dbReference>
<dbReference type="PROSITE" id="PS01353">
    <property type="entry name" value="HEMATOPO_REC_L_F2"/>
    <property type="match status" value="1"/>
</dbReference>
<reference key="1">
    <citation type="submission" date="2004-09" db="EMBL/GenBank/DDBJ databases">
        <title>Expression of LIFR in the normal canine pituitary and in corticotroph adenomas.</title>
        <authorList>
            <person name="Hanson J.M."/>
            <person name="Mol J.A."/>
            <person name="Meij B.P."/>
        </authorList>
    </citation>
    <scope>NUCLEOTIDE SEQUENCE [MRNA]</scope>
</reference>
<keyword id="KW-1003">Cell membrane</keyword>
<keyword id="KW-1015">Disulfide bond</keyword>
<keyword id="KW-0325">Glycoprotein</keyword>
<keyword id="KW-0472">Membrane</keyword>
<keyword id="KW-0597">Phosphoprotein</keyword>
<keyword id="KW-0675">Receptor</keyword>
<keyword id="KW-1185">Reference proteome</keyword>
<keyword id="KW-0677">Repeat</keyword>
<keyword id="KW-0732">Signal</keyword>
<keyword id="KW-0812">Transmembrane</keyword>
<keyword id="KW-1133">Transmembrane helix</keyword>
<name>LIFR_CANLF</name>
<organism>
    <name type="scientific">Canis lupus familiaris</name>
    <name type="common">Dog</name>
    <name type="synonym">Canis familiaris</name>
    <dbReference type="NCBI Taxonomy" id="9615"/>
    <lineage>
        <taxon>Eukaryota</taxon>
        <taxon>Metazoa</taxon>
        <taxon>Chordata</taxon>
        <taxon>Craniata</taxon>
        <taxon>Vertebrata</taxon>
        <taxon>Euteleostomi</taxon>
        <taxon>Mammalia</taxon>
        <taxon>Eutheria</taxon>
        <taxon>Laurasiatheria</taxon>
        <taxon>Carnivora</taxon>
        <taxon>Caniformia</taxon>
        <taxon>Canidae</taxon>
        <taxon>Canis</taxon>
    </lineage>
</organism>
<feature type="signal peptide" evidence="4">
    <location>
        <begin position="1"/>
        <end position="44"/>
    </location>
</feature>
<feature type="chain" id="PRO_0000228094" description="Leukemia inhibitory factor receptor">
    <location>
        <begin position="45"/>
        <end position="1097"/>
    </location>
</feature>
<feature type="topological domain" description="Extracellular" evidence="4">
    <location>
        <begin position="45"/>
        <end position="833"/>
    </location>
</feature>
<feature type="transmembrane region" description="Helical" evidence="4">
    <location>
        <begin position="834"/>
        <end position="854"/>
    </location>
</feature>
<feature type="topological domain" description="Cytoplasmic" evidence="4">
    <location>
        <begin position="855"/>
        <end position="1097"/>
    </location>
</feature>
<feature type="domain" description="Fibronectin type-III 1" evidence="5">
    <location>
        <begin position="46"/>
        <end position="131"/>
    </location>
</feature>
<feature type="domain" description="Fibronectin type-III 2" evidence="5">
    <location>
        <begin position="332"/>
        <end position="434"/>
    </location>
</feature>
<feature type="domain" description="Fibronectin type-III 3" evidence="5">
    <location>
        <begin position="435"/>
        <end position="534"/>
    </location>
</feature>
<feature type="domain" description="Fibronectin type-III 4" evidence="5">
    <location>
        <begin position="538"/>
        <end position="629"/>
    </location>
</feature>
<feature type="domain" description="Fibronectin type-III 5" evidence="5">
    <location>
        <begin position="627"/>
        <end position="719"/>
    </location>
</feature>
<feature type="domain" description="Fibronectin type-III 6" evidence="5">
    <location>
        <begin position="724"/>
        <end position="833"/>
    </location>
</feature>
<feature type="region of interest" description="Disordered" evidence="6">
    <location>
        <begin position="982"/>
        <end position="1005"/>
    </location>
</feature>
<feature type="region of interest" description="Disordered" evidence="6">
    <location>
        <begin position="1022"/>
        <end position="1097"/>
    </location>
</feature>
<feature type="short sequence motif" description="WSXWS motif">
    <location>
        <begin position="519"/>
        <end position="523"/>
    </location>
</feature>
<feature type="short sequence motif" description="Box 1 motif">
    <location>
        <begin position="869"/>
        <end position="877"/>
    </location>
</feature>
<feature type="compositionally biased region" description="Polar residues" evidence="6">
    <location>
        <begin position="1032"/>
        <end position="1067"/>
    </location>
</feature>
<feature type="compositionally biased region" description="Polar residues" evidence="6">
    <location>
        <begin position="1086"/>
        <end position="1097"/>
    </location>
</feature>
<feature type="modified residue" description="Phosphoserine" evidence="2">
    <location>
        <position position="927"/>
    </location>
</feature>
<feature type="modified residue" description="Phosphoserine" evidence="3">
    <location>
        <position position="1044"/>
    </location>
</feature>
<feature type="glycosylation site" description="N-linked (GlcNAc...) asparagine" evidence="4">
    <location>
        <position position="85"/>
    </location>
</feature>
<feature type="glycosylation site" description="N-linked (GlcNAc...) asparagine" evidence="4">
    <location>
        <position position="131"/>
    </location>
</feature>
<feature type="glycosylation site" description="N-linked (GlcNAc...) asparagine" evidence="4">
    <location>
        <position position="143"/>
    </location>
</feature>
<feature type="glycosylation site" description="N-linked (GlcNAc...) asparagine" evidence="4">
    <location>
        <position position="191"/>
    </location>
</feature>
<feature type="glycosylation site" description="N-linked (GlcNAc...) asparagine" evidence="4">
    <location>
        <position position="243"/>
    </location>
</feature>
<feature type="glycosylation site" description="N-linked (GlcNAc...) asparagine" evidence="4">
    <location>
        <position position="303"/>
    </location>
</feature>
<feature type="glycosylation site" description="N-linked (GlcNAc...) asparagine" evidence="4">
    <location>
        <position position="366"/>
    </location>
</feature>
<feature type="glycosylation site" description="N-linked (GlcNAc...) asparagine" evidence="4">
    <location>
        <position position="390"/>
    </location>
</feature>
<feature type="glycosylation site" description="N-linked (GlcNAc...) asparagine" evidence="4">
    <location>
        <position position="407"/>
    </location>
</feature>
<feature type="glycosylation site" description="N-linked (GlcNAc...) asparagine" evidence="4">
    <location>
        <position position="426"/>
    </location>
</feature>
<feature type="glycosylation site" description="N-linked (GlcNAc...) asparagine" evidence="4">
    <location>
        <position position="445"/>
    </location>
</feature>
<feature type="glycosylation site" description="N-linked (GlcNAc...) asparagine" evidence="4">
    <location>
        <position position="471"/>
    </location>
</feature>
<feature type="glycosylation site" description="N-linked (GlcNAc...) asparagine" evidence="4">
    <location>
        <position position="481"/>
    </location>
</feature>
<feature type="glycosylation site" description="N-linked (GlcNAc...) asparagine" evidence="4">
    <location>
        <position position="489"/>
    </location>
</feature>
<feature type="glycosylation site" description="N-linked (GlcNAc...) asparagine" evidence="4">
    <location>
        <position position="572"/>
    </location>
</feature>
<feature type="glycosylation site" description="N-linked (GlcNAc...) asparagine" evidence="4">
    <location>
        <position position="652"/>
    </location>
</feature>
<feature type="glycosylation site" description="N-linked (GlcNAc...) asparagine" evidence="4">
    <location>
        <position position="663"/>
    </location>
</feature>
<feature type="glycosylation site" description="N-linked (GlcNAc...) asparagine" evidence="4">
    <location>
        <position position="680"/>
    </location>
</feature>
<feature type="glycosylation site" description="N-linked (GlcNAc...) asparagine" evidence="4">
    <location>
        <position position="729"/>
    </location>
</feature>
<feature type="glycosylation site" description="N-linked (GlcNAc...) asparagine" evidence="4">
    <location>
        <position position="787"/>
    </location>
</feature>
<feature type="disulfide bond" evidence="1">
    <location>
        <begin position="55"/>
        <end position="65"/>
    </location>
</feature>
<feature type="disulfide bond" evidence="1">
    <location>
        <begin position="82"/>
        <end position="90"/>
    </location>
</feature>
<feature type="disulfide bond" evidence="1">
    <location>
        <begin position="213"/>
        <end position="270"/>
    </location>
</feature>
<feature type="disulfide bond" evidence="1">
    <location>
        <begin position="341"/>
        <end position="351"/>
    </location>
</feature>
<feature type="disulfide bond" evidence="1">
    <location>
        <begin position="466"/>
        <end position="511"/>
    </location>
</feature>
<comment type="function">
    <text evidence="1">Signal-transducing molecule. May have a common pathway with IL6ST. The soluble form inhibits the biological activity of LIF by blocking its binding to receptors on target cells (By similarity).</text>
</comment>
<comment type="subunit">
    <text evidence="1">Heterodimer composed of LIFR and IL6ST. The heterodimer formed by LIFR and IL6ST interacts with the complex formed by CNTF and CNTFR (By similarity).</text>
</comment>
<comment type="subcellular location">
    <subcellularLocation>
        <location evidence="1">Cell membrane</location>
        <topology evidence="1">Single-pass type I membrane protein</topology>
    </subcellularLocation>
</comment>
<comment type="domain">
    <text>The WSXWS motif appears to be necessary for proper protein folding and thereby efficient intracellular transport and cell-surface receptor binding.</text>
</comment>
<comment type="domain">
    <text>The box 1 motif is required for JAK interaction and/or activation.</text>
</comment>
<comment type="similarity">
    <text evidence="7">Belongs to the type I cytokine receptor family. Type 2 subfamily.</text>
</comment>
<evidence type="ECO:0000250" key="1"/>
<evidence type="ECO:0000250" key="2">
    <source>
        <dbReference type="UniProtKB" id="P42702"/>
    </source>
</evidence>
<evidence type="ECO:0000250" key="3">
    <source>
        <dbReference type="UniProtKB" id="P42703"/>
    </source>
</evidence>
<evidence type="ECO:0000255" key="4"/>
<evidence type="ECO:0000255" key="5">
    <source>
        <dbReference type="PROSITE-ProRule" id="PRU00316"/>
    </source>
</evidence>
<evidence type="ECO:0000256" key="6">
    <source>
        <dbReference type="SAM" id="MobiDB-lite"/>
    </source>
</evidence>
<evidence type="ECO:0000305" key="7"/>
<protein>
    <recommendedName>
        <fullName>Leukemia inhibitory factor receptor</fullName>
        <shortName>LIF receptor</shortName>
        <shortName>LIF-R</shortName>
    </recommendedName>
    <cdAntigenName>CD118</cdAntigenName>
</protein>
<sequence length="1097" mass="123688">MMNISLRLRRPPWMVDSNGRRMTSHFQWLLLTFILLYLMNQVTSEKRGAPRDLKCITNNLRVWDCSWKAPSAAGHGTVYEICIENRSHSCYQSEKTNTKIPALLPGDHEITINRLYDFGNPISKFTLNEKNVSLIPDTPEILNLSADFSTSTIHLKWNDRGSVFPHQLTVIWEIKILRKENMEIVKLITHNTTVNGKDTVHHWSWTSDMPLECAIHSVGIRCYVDDPHFSGRKEWSDWSPLKNISWSPDSQTKVFPQDKVILVGSDITFCCVTQEKVLSAQIGQTNCPLIHLDGENVAIKIHNISVSANSGTNVVFTTEDNIFGTVIFVGYPPDIPQKVNCETYDLKEIVCTWNPGRPTALVGPRNTSYTLFESFSGKYVRFKRVEAPTNESYQLFFQMRPNQEIYNFTLNARNPLGRSESTILINITEKVYPRIPTSIKVKDINSTAVMLSWHLPGNFAKIKLLCQIEINKTNSVQELRNVTIKGVENSSYLVAVDKLNPYTIYTFRIRCSTETFWKWSKWSNEKKYLTTEAIPSKGPDTWREWSSDGKNLIIYWKPLPINEANGKILSYNVSCSLDEETQSLSEIPDPQHKAELQLDKNDYIISVVAKNSVGSSPPSKIASMEIPNDDLKVEQAVGMGNGILLTWNYDPNMTCDYVIKWCNSSRSEPCLMDWKKVPSNSTEAVIESDQFRPGVRYSFFLYGCRNEGYQLLRSIIGYIEELAPIVAPNFTVEDTSADSILVKWEDIPVEELRGFLRGYLFYFEKGERDTSKIRGLESGRSDIKVKNITDLSQKTLRIADLQGKTSYHLVLRAYTDGGMGPEKSMFVVTKENSVGLIIAILIPVAVAVIVGVVTSILCYRKREWIKETFYPDIPNPENCKALQFQKSVCEGNSALKTLEMNPCTPNNVEVLETRSAVPKIEDTEIISPIAERPEESSDAEAENHVVVSYCPPVIEEETPNPGADEAGGASQVVYIDIQSMYQPQAKPEEEQENDPVGGAGYKPQMHLPVTSTVEDLAAEDDLDKAAGYRPQANVNTWNLVSPDSPRSTDSNSEIVSFGSPCSINSRQFLIPPKDEDSPKSSGGGWSFTNFFQNKPND</sequence>
<accession>Q5XNR9</accession>
<proteinExistence type="evidence at transcript level"/>
<gene>
    <name type="primary">LIFR</name>
</gene>